<dbReference type="EC" id="2.1.2.9" evidence="1"/>
<dbReference type="EMBL" id="CP000469">
    <property type="protein sequence ID" value="ABK46279.1"/>
    <property type="molecule type" value="Genomic_DNA"/>
</dbReference>
<dbReference type="RefSeq" id="WP_011715325.1">
    <property type="nucleotide sequence ID" value="NC_008577.1"/>
</dbReference>
<dbReference type="SMR" id="A0KR60"/>
<dbReference type="STRING" id="94122.Shewana3_0034"/>
<dbReference type="KEGG" id="shn:Shewana3_0034"/>
<dbReference type="eggNOG" id="COG0223">
    <property type="taxonomic scope" value="Bacteria"/>
</dbReference>
<dbReference type="HOGENOM" id="CLU_033347_1_2_6"/>
<dbReference type="OrthoDB" id="9802815at2"/>
<dbReference type="Proteomes" id="UP000002589">
    <property type="component" value="Chromosome"/>
</dbReference>
<dbReference type="GO" id="GO:0005829">
    <property type="term" value="C:cytosol"/>
    <property type="evidence" value="ECO:0007669"/>
    <property type="project" value="TreeGrafter"/>
</dbReference>
<dbReference type="GO" id="GO:0004479">
    <property type="term" value="F:methionyl-tRNA formyltransferase activity"/>
    <property type="evidence" value="ECO:0007669"/>
    <property type="project" value="UniProtKB-UniRule"/>
</dbReference>
<dbReference type="CDD" id="cd08646">
    <property type="entry name" value="FMT_core_Met-tRNA-FMT_N"/>
    <property type="match status" value="1"/>
</dbReference>
<dbReference type="CDD" id="cd08704">
    <property type="entry name" value="Met_tRNA_FMT_C"/>
    <property type="match status" value="1"/>
</dbReference>
<dbReference type="FunFam" id="3.10.25.10:FF:000001">
    <property type="entry name" value="Methionyl-tRNA formyltransferase"/>
    <property type="match status" value="1"/>
</dbReference>
<dbReference type="FunFam" id="3.40.50.12230:FF:000001">
    <property type="entry name" value="Methionyl-tRNA formyltransferase"/>
    <property type="match status" value="1"/>
</dbReference>
<dbReference type="FunFam" id="3.40.50.170:FF:000003">
    <property type="entry name" value="Methionyl-tRNA formyltransferase"/>
    <property type="match status" value="1"/>
</dbReference>
<dbReference type="Gene3D" id="3.10.25.10">
    <property type="entry name" value="Formyl transferase, C-terminal domain"/>
    <property type="match status" value="1"/>
</dbReference>
<dbReference type="Gene3D" id="3.40.50.170">
    <property type="entry name" value="Formyl transferase, N-terminal domain"/>
    <property type="match status" value="1"/>
</dbReference>
<dbReference type="HAMAP" id="MF_00182">
    <property type="entry name" value="Formyl_trans"/>
    <property type="match status" value="1"/>
</dbReference>
<dbReference type="InterPro" id="IPR005794">
    <property type="entry name" value="Fmt"/>
</dbReference>
<dbReference type="InterPro" id="IPR005793">
    <property type="entry name" value="Formyl_trans_C"/>
</dbReference>
<dbReference type="InterPro" id="IPR037022">
    <property type="entry name" value="Formyl_trans_C_sf"/>
</dbReference>
<dbReference type="InterPro" id="IPR002376">
    <property type="entry name" value="Formyl_transf_N"/>
</dbReference>
<dbReference type="InterPro" id="IPR036477">
    <property type="entry name" value="Formyl_transf_N_sf"/>
</dbReference>
<dbReference type="InterPro" id="IPR011034">
    <property type="entry name" value="Formyl_transferase-like_C_sf"/>
</dbReference>
<dbReference type="InterPro" id="IPR001555">
    <property type="entry name" value="GART_AS"/>
</dbReference>
<dbReference type="InterPro" id="IPR044135">
    <property type="entry name" value="Met-tRNA-FMT_C"/>
</dbReference>
<dbReference type="InterPro" id="IPR041711">
    <property type="entry name" value="Met-tRNA-FMT_N"/>
</dbReference>
<dbReference type="NCBIfam" id="TIGR00460">
    <property type="entry name" value="fmt"/>
    <property type="match status" value="1"/>
</dbReference>
<dbReference type="PANTHER" id="PTHR11138">
    <property type="entry name" value="METHIONYL-TRNA FORMYLTRANSFERASE"/>
    <property type="match status" value="1"/>
</dbReference>
<dbReference type="PANTHER" id="PTHR11138:SF5">
    <property type="entry name" value="METHIONYL-TRNA FORMYLTRANSFERASE, MITOCHONDRIAL"/>
    <property type="match status" value="1"/>
</dbReference>
<dbReference type="Pfam" id="PF02911">
    <property type="entry name" value="Formyl_trans_C"/>
    <property type="match status" value="1"/>
</dbReference>
<dbReference type="Pfam" id="PF00551">
    <property type="entry name" value="Formyl_trans_N"/>
    <property type="match status" value="1"/>
</dbReference>
<dbReference type="SUPFAM" id="SSF50486">
    <property type="entry name" value="FMT C-terminal domain-like"/>
    <property type="match status" value="1"/>
</dbReference>
<dbReference type="SUPFAM" id="SSF53328">
    <property type="entry name" value="Formyltransferase"/>
    <property type="match status" value="1"/>
</dbReference>
<dbReference type="PROSITE" id="PS00373">
    <property type="entry name" value="GART"/>
    <property type="match status" value="1"/>
</dbReference>
<gene>
    <name evidence="1" type="primary">fmt</name>
    <name type="ordered locus">Shewana3_0034</name>
</gene>
<reference key="1">
    <citation type="submission" date="2006-09" db="EMBL/GenBank/DDBJ databases">
        <title>Complete sequence of chromosome 1 of Shewanella sp. ANA-3.</title>
        <authorList>
            <person name="Copeland A."/>
            <person name="Lucas S."/>
            <person name="Lapidus A."/>
            <person name="Barry K."/>
            <person name="Detter J.C."/>
            <person name="Glavina del Rio T."/>
            <person name="Hammon N."/>
            <person name="Israni S."/>
            <person name="Dalin E."/>
            <person name="Tice H."/>
            <person name="Pitluck S."/>
            <person name="Chertkov O."/>
            <person name="Brettin T."/>
            <person name="Bruce D."/>
            <person name="Han C."/>
            <person name="Tapia R."/>
            <person name="Gilna P."/>
            <person name="Schmutz J."/>
            <person name="Larimer F."/>
            <person name="Land M."/>
            <person name="Hauser L."/>
            <person name="Kyrpides N."/>
            <person name="Kim E."/>
            <person name="Newman D."/>
            <person name="Salticov C."/>
            <person name="Konstantinidis K."/>
            <person name="Klappenback J."/>
            <person name="Tiedje J."/>
            <person name="Richardson P."/>
        </authorList>
    </citation>
    <scope>NUCLEOTIDE SEQUENCE [LARGE SCALE GENOMIC DNA]</scope>
    <source>
        <strain>ANA-3</strain>
    </source>
</reference>
<sequence length="318" mass="34659">MKPLNIIFAGTPDFAARHLQALINSHHNVIAVYTQPDRPAGRGKKLTASPVKELAVSHDIPVYQPGSLRKEPAQQELAALNADIMVVVAYGLILPKVVLDTPRLGCINVHGSILPRWRGAAPIQRALWAGDKETGVTIMQMDVGLDTGDMLLKTYLPIEDDDTSATLYEKLALQGPDALLQALEGLANGTLTAEKQDEVLANYAEKLSKEEARLDWRKSATQLWQEVRAFNPWPVSYFEHQGNTIKVWQTQVSTTSSNAAPGTIISASKKGIEVATGDGVLTLLSMQLPGKKPLSVADILNARGDWFTPNTRLNNEAQ</sequence>
<evidence type="ECO:0000255" key="1">
    <source>
        <dbReference type="HAMAP-Rule" id="MF_00182"/>
    </source>
</evidence>
<organism>
    <name type="scientific">Shewanella sp. (strain ANA-3)</name>
    <dbReference type="NCBI Taxonomy" id="94122"/>
    <lineage>
        <taxon>Bacteria</taxon>
        <taxon>Pseudomonadati</taxon>
        <taxon>Pseudomonadota</taxon>
        <taxon>Gammaproteobacteria</taxon>
        <taxon>Alteromonadales</taxon>
        <taxon>Shewanellaceae</taxon>
        <taxon>Shewanella</taxon>
    </lineage>
</organism>
<comment type="function">
    <text evidence="1">Attaches a formyl group to the free amino group of methionyl-tRNA(fMet). The formyl group appears to play a dual role in the initiator identity of N-formylmethionyl-tRNA by promoting its recognition by IF2 and preventing the misappropriation of this tRNA by the elongation apparatus.</text>
</comment>
<comment type="catalytic activity">
    <reaction evidence="1">
        <text>L-methionyl-tRNA(fMet) + (6R)-10-formyltetrahydrofolate = N-formyl-L-methionyl-tRNA(fMet) + (6S)-5,6,7,8-tetrahydrofolate + H(+)</text>
        <dbReference type="Rhea" id="RHEA:24380"/>
        <dbReference type="Rhea" id="RHEA-COMP:9952"/>
        <dbReference type="Rhea" id="RHEA-COMP:9953"/>
        <dbReference type="ChEBI" id="CHEBI:15378"/>
        <dbReference type="ChEBI" id="CHEBI:57453"/>
        <dbReference type="ChEBI" id="CHEBI:78530"/>
        <dbReference type="ChEBI" id="CHEBI:78844"/>
        <dbReference type="ChEBI" id="CHEBI:195366"/>
        <dbReference type="EC" id="2.1.2.9"/>
    </reaction>
</comment>
<comment type="similarity">
    <text evidence="1">Belongs to the Fmt family.</text>
</comment>
<name>FMT_SHESA</name>
<feature type="chain" id="PRO_1000020158" description="Methionyl-tRNA formyltransferase">
    <location>
        <begin position="1"/>
        <end position="318"/>
    </location>
</feature>
<feature type="binding site" evidence="1">
    <location>
        <begin position="112"/>
        <end position="115"/>
    </location>
    <ligand>
        <name>(6S)-5,6,7,8-tetrahydrofolate</name>
        <dbReference type="ChEBI" id="CHEBI:57453"/>
    </ligand>
</feature>
<accession>A0KR60</accession>
<protein>
    <recommendedName>
        <fullName evidence="1">Methionyl-tRNA formyltransferase</fullName>
        <ecNumber evidence="1">2.1.2.9</ecNumber>
    </recommendedName>
</protein>
<keyword id="KW-0648">Protein biosynthesis</keyword>
<keyword id="KW-0808">Transferase</keyword>
<proteinExistence type="inferred from homology"/>